<dbReference type="EC" id="2.7.8.13" evidence="1"/>
<dbReference type="EMBL" id="CP000029">
    <property type="protein sequence ID" value="AAW54127.1"/>
    <property type="molecule type" value="Genomic_DNA"/>
</dbReference>
<dbReference type="RefSeq" id="WP_002446226.1">
    <property type="nucleotide sequence ID" value="NC_002976.3"/>
</dbReference>
<dbReference type="SMR" id="Q5HQ10"/>
<dbReference type="STRING" id="176279.SERP0747"/>
<dbReference type="KEGG" id="ser:SERP0747"/>
<dbReference type="eggNOG" id="COG0472">
    <property type="taxonomic scope" value="Bacteria"/>
</dbReference>
<dbReference type="HOGENOM" id="CLU_023982_0_1_9"/>
<dbReference type="UniPathway" id="UPA00219"/>
<dbReference type="Proteomes" id="UP000000531">
    <property type="component" value="Chromosome"/>
</dbReference>
<dbReference type="GO" id="GO:0005886">
    <property type="term" value="C:plasma membrane"/>
    <property type="evidence" value="ECO:0007669"/>
    <property type="project" value="UniProtKB-SubCell"/>
</dbReference>
<dbReference type="GO" id="GO:0046872">
    <property type="term" value="F:metal ion binding"/>
    <property type="evidence" value="ECO:0007669"/>
    <property type="project" value="UniProtKB-KW"/>
</dbReference>
<dbReference type="GO" id="GO:0008963">
    <property type="term" value="F:phospho-N-acetylmuramoyl-pentapeptide-transferase activity"/>
    <property type="evidence" value="ECO:0007669"/>
    <property type="project" value="UniProtKB-UniRule"/>
</dbReference>
<dbReference type="GO" id="GO:0051301">
    <property type="term" value="P:cell division"/>
    <property type="evidence" value="ECO:0007669"/>
    <property type="project" value="UniProtKB-KW"/>
</dbReference>
<dbReference type="GO" id="GO:0071555">
    <property type="term" value="P:cell wall organization"/>
    <property type="evidence" value="ECO:0007669"/>
    <property type="project" value="UniProtKB-KW"/>
</dbReference>
<dbReference type="GO" id="GO:0009252">
    <property type="term" value="P:peptidoglycan biosynthetic process"/>
    <property type="evidence" value="ECO:0007669"/>
    <property type="project" value="UniProtKB-UniRule"/>
</dbReference>
<dbReference type="GO" id="GO:0008360">
    <property type="term" value="P:regulation of cell shape"/>
    <property type="evidence" value="ECO:0007669"/>
    <property type="project" value="UniProtKB-KW"/>
</dbReference>
<dbReference type="CDD" id="cd06852">
    <property type="entry name" value="GT_MraY"/>
    <property type="match status" value="1"/>
</dbReference>
<dbReference type="HAMAP" id="MF_00038">
    <property type="entry name" value="MraY"/>
    <property type="match status" value="1"/>
</dbReference>
<dbReference type="InterPro" id="IPR000715">
    <property type="entry name" value="Glycosyl_transferase_4"/>
</dbReference>
<dbReference type="InterPro" id="IPR003524">
    <property type="entry name" value="PNAcMuramoyl-5peptid_Trfase"/>
</dbReference>
<dbReference type="InterPro" id="IPR018480">
    <property type="entry name" value="PNAcMuramoyl-5peptid_Trfase_CS"/>
</dbReference>
<dbReference type="NCBIfam" id="TIGR00445">
    <property type="entry name" value="mraY"/>
    <property type="match status" value="1"/>
</dbReference>
<dbReference type="PANTHER" id="PTHR22926">
    <property type="entry name" value="PHOSPHO-N-ACETYLMURAMOYL-PENTAPEPTIDE-TRANSFERASE"/>
    <property type="match status" value="1"/>
</dbReference>
<dbReference type="PANTHER" id="PTHR22926:SF5">
    <property type="entry name" value="PHOSPHO-N-ACETYLMURAMOYL-PENTAPEPTIDE-TRANSFERASE HOMOLOG"/>
    <property type="match status" value="1"/>
</dbReference>
<dbReference type="Pfam" id="PF00953">
    <property type="entry name" value="Glycos_transf_4"/>
    <property type="match status" value="1"/>
</dbReference>
<dbReference type="PROSITE" id="PS01347">
    <property type="entry name" value="MRAY_1"/>
    <property type="match status" value="1"/>
</dbReference>
<dbReference type="PROSITE" id="PS01348">
    <property type="entry name" value="MRAY_2"/>
    <property type="match status" value="1"/>
</dbReference>
<accession>Q5HQ10</accession>
<evidence type="ECO:0000255" key="1">
    <source>
        <dbReference type="HAMAP-Rule" id="MF_00038"/>
    </source>
</evidence>
<sequence>MIFIYAIIALLITFILVPILIPTLKRMKFGQSIREEGPQSHMKKTGTPTMGGLTFLISIIITSIIAIIFVDHSNPIILLLFVTIGFGLIGFIDDYIIVVKKNNQGLTSKQKFLAQIIIAVIFFVLSDVFHLVHFTTDLHIPFVNFDIPLSFAYVIFIVFWQVGFSNAVNLTDGLDGLATGLSIIGFAMYAVMSYMLDSPAIGIFCIIMIFALLGFLPYNLNPAKVFMGDTGSLALGGIFATISIMLNQELSLILIGFVFVVETLSVMLQVASYKLTKKRIFKMSPIHHHFELSGWGEWKVVTVFWTVGLITGLIGLWIGVH</sequence>
<protein>
    <recommendedName>
        <fullName evidence="1">Phospho-N-acetylmuramoyl-pentapeptide-transferase</fullName>
        <ecNumber evidence="1">2.7.8.13</ecNumber>
    </recommendedName>
    <alternativeName>
        <fullName evidence="1">UDP-MurNAc-pentapeptide phosphotransferase</fullName>
    </alternativeName>
</protein>
<proteinExistence type="inferred from homology"/>
<gene>
    <name evidence="1" type="primary">mraY</name>
    <name type="ordered locus">SERP0747</name>
</gene>
<keyword id="KW-0131">Cell cycle</keyword>
<keyword id="KW-0132">Cell division</keyword>
<keyword id="KW-1003">Cell membrane</keyword>
<keyword id="KW-0133">Cell shape</keyword>
<keyword id="KW-0961">Cell wall biogenesis/degradation</keyword>
<keyword id="KW-0460">Magnesium</keyword>
<keyword id="KW-0472">Membrane</keyword>
<keyword id="KW-0479">Metal-binding</keyword>
<keyword id="KW-0573">Peptidoglycan synthesis</keyword>
<keyword id="KW-1185">Reference proteome</keyword>
<keyword id="KW-0808">Transferase</keyword>
<keyword id="KW-0812">Transmembrane</keyword>
<keyword id="KW-1133">Transmembrane helix</keyword>
<organism>
    <name type="scientific">Staphylococcus epidermidis (strain ATCC 35984 / DSM 28319 / BCRC 17069 / CCUG 31568 / BM 3577 / RP62A)</name>
    <dbReference type="NCBI Taxonomy" id="176279"/>
    <lineage>
        <taxon>Bacteria</taxon>
        <taxon>Bacillati</taxon>
        <taxon>Bacillota</taxon>
        <taxon>Bacilli</taxon>
        <taxon>Bacillales</taxon>
        <taxon>Staphylococcaceae</taxon>
        <taxon>Staphylococcus</taxon>
    </lineage>
</organism>
<comment type="function">
    <text evidence="1">Catalyzes the initial step of the lipid cycle reactions in the biosynthesis of the cell wall peptidoglycan: transfers peptidoglycan precursor phospho-MurNAc-pentapeptide from UDP-MurNAc-pentapeptide onto the lipid carrier undecaprenyl phosphate, yielding undecaprenyl-pyrophosphoryl-MurNAc-pentapeptide, known as lipid I.</text>
</comment>
<comment type="catalytic activity">
    <reaction evidence="1">
        <text>UDP-N-acetyl-alpha-D-muramoyl-L-alanyl-gamma-D-glutamyl-L-lysyl-D-alanyl-D-alanine + di-trans,octa-cis-undecaprenyl phosphate = Mur2Ac(oyl-L-Ala-gamma-D-Glu-L-Lys-D-Ala-D-Ala)-di-trans,octa-cis-undecaprenyl diphosphate + UMP</text>
        <dbReference type="Rhea" id="RHEA:21920"/>
        <dbReference type="ChEBI" id="CHEBI:57865"/>
        <dbReference type="ChEBI" id="CHEBI:60032"/>
        <dbReference type="ChEBI" id="CHEBI:60392"/>
        <dbReference type="ChEBI" id="CHEBI:70758"/>
        <dbReference type="EC" id="2.7.8.13"/>
    </reaction>
</comment>
<comment type="cofactor">
    <cofactor evidence="1">
        <name>Mg(2+)</name>
        <dbReference type="ChEBI" id="CHEBI:18420"/>
    </cofactor>
</comment>
<comment type="pathway">
    <text evidence="1">Cell wall biogenesis; peptidoglycan biosynthesis.</text>
</comment>
<comment type="subcellular location">
    <subcellularLocation>
        <location evidence="1">Cell membrane</location>
        <topology evidence="1">Multi-pass membrane protein</topology>
    </subcellularLocation>
</comment>
<comment type="similarity">
    <text evidence="1">Belongs to the glycosyltransferase 4 family. MraY subfamily.</text>
</comment>
<reference key="1">
    <citation type="journal article" date="2005" name="J. Bacteriol.">
        <title>Insights on evolution of virulence and resistance from the complete genome analysis of an early methicillin-resistant Staphylococcus aureus strain and a biofilm-producing methicillin-resistant Staphylococcus epidermidis strain.</title>
        <authorList>
            <person name="Gill S.R."/>
            <person name="Fouts D.E."/>
            <person name="Archer G.L."/>
            <person name="Mongodin E.F."/>
            <person name="DeBoy R.T."/>
            <person name="Ravel J."/>
            <person name="Paulsen I.T."/>
            <person name="Kolonay J.F."/>
            <person name="Brinkac L.M."/>
            <person name="Beanan M.J."/>
            <person name="Dodson R.J."/>
            <person name="Daugherty S.C."/>
            <person name="Madupu R."/>
            <person name="Angiuoli S.V."/>
            <person name="Durkin A.S."/>
            <person name="Haft D.H."/>
            <person name="Vamathevan J.J."/>
            <person name="Khouri H."/>
            <person name="Utterback T.R."/>
            <person name="Lee C."/>
            <person name="Dimitrov G."/>
            <person name="Jiang L."/>
            <person name="Qin H."/>
            <person name="Weidman J."/>
            <person name="Tran K."/>
            <person name="Kang K.H."/>
            <person name="Hance I.R."/>
            <person name="Nelson K.E."/>
            <person name="Fraser C.M."/>
        </authorList>
    </citation>
    <scope>NUCLEOTIDE SEQUENCE [LARGE SCALE GENOMIC DNA]</scope>
    <source>
        <strain>ATCC 35984 / DSM 28319 / BCRC 17069 / CCUG 31568 / BM 3577 / RP62A</strain>
    </source>
</reference>
<feature type="chain" id="PRO_0000108898" description="Phospho-N-acetylmuramoyl-pentapeptide-transferase">
    <location>
        <begin position="1"/>
        <end position="321"/>
    </location>
</feature>
<feature type="transmembrane region" description="Helical" evidence="1">
    <location>
        <begin position="1"/>
        <end position="21"/>
    </location>
</feature>
<feature type="transmembrane region" description="Helical" evidence="1">
    <location>
        <begin position="50"/>
        <end position="70"/>
    </location>
</feature>
<feature type="transmembrane region" description="Helical" evidence="1">
    <location>
        <begin position="76"/>
        <end position="96"/>
    </location>
</feature>
<feature type="transmembrane region" description="Helical" evidence="1">
    <location>
        <begin position="112"/>
        <end position="132"/>
    </location>
</feature>
<feature type="transmembrane region" description="Helical" evidence="1">
    <location>
        <begin position="140"/>
        <end position="160"/>
    </location>
</feature>
<feature type="transmembrane region" description="Helical" evidence="1">
    <location>
        <begin position="176"/>
        <end position="196"/>
    </location>
</feature>
<feature type="transmembrane region" description="Helical" evidence="1">
    <location>
        <begin position="200"/>
        <end position="220"/>
    </location>
</feature>
<feature type="transmembrane region" description="Helical" evidence="1">
    <location>
        <begin position="225"/>
        <end position="245"/>
    </location>
</feature>
<feature type="transmembrane region" description="Helical" evidence="1">
    <location>
        <begin position="250"/>
        <end position="270"/>
    </location>
</feature>
<feature type="transmembrane region" description="Helical" evidence="1">
    <location>
        <begin position="300"/>
        <end position="320"/>
    </location>
</feature>
<name>MRAY_STAEQ</name>